<reference key="1">
    <citation type="journal article" date="1994" name="Biochim. Biophys. Acta">
        <title>Complete nucleotide and deduced amino acid sequence of rat amyloid protein precursor-like protein 2 (APLP2/APPH): two amino acids length difference to human and murine homologues.</title>
        <authorList>
            <person name="Sandbrink R."/>
            <person name="Masters C.L."/>
            <person name="Beyreuther K."/>
        </authorList>
    </citation>
    <scope>NUCLEOTIDE SEQUENCE [MRNA] OF 1-627</scope>
    <source>
        <strain>Wistar</strain>
        <tissue>Brain</tissue>
        <tissue>Heart</tissue>
    </source>
</reference>
<reference key="2">
    <citation type="journal article" date="1990" name="Proc. Natl. Acad. Sci. U.S.A.">
        <title>Characterization of cDNA encoding a human sperm membrane protein related to A4 amyloid protein.</title>
        <authorList>
            <person name="Yan Y.C."/>
            <person name="Bai Y."/>
            <person name="Wang L.F."/>
            <person name="Miao S.Y."/>
            <person name="Koide S.S."/>
        </authorList>
    </citation>
    <scope>NUCLEOTIDE SEQUENCE [MRNA] OF 575-765</scope>
    <source>
        <tissue>Testis</tissue>
    </source>
</reference>
<reference key="3">
    <citation type="journal article" date="2012" name="Nat. Commun.">
        <title>Quantitative maps of protein phosphorylation sites across 14 different rat organs and tissues.</title>
        <authorList>
            <person name="Lundby A."/>
            <person name="Secher A."/>
            <person name="Lage K."/>
            <person name="Nordsborg N.B."/>
            <person name="Dmytriyev A."/>
            <person name="Lundby C."/>
            <person name="Olsen J.V."/>
        </authorList>
    </citation>
    <scope>PHOSPHORYLATION [LARGE SCALE ANALYSIS] AT SER-216</scope>
    <scope>IDENTIFICATION BY MASS SPECTROMETRY [LARGE SCALE ANALYSIS]</scope>
</reference>
<evidence type="ECO:0000250" key="1"/>
<evidence type="ECO:0000250" key="2">
    <source>
        <dbReference type="UniProtKB" id="Q06335"/>
    </source>
</evidence>
<evidence type="ECO:0000250" key="3">
    <source>
        <dbReference type="UniProtKB" id="Q06481"/>
    </source>
</evidence>
<evidence type="ECO:0000255" key="4"/>
<evidence type="ECO:0000255" key="5">
    <source>
        <dbReference type="PROSITE-ProRule" id="PRU00031"/>
    </source>
</evidence>
<evidence type="ECO:0000255" key="6">
    <source>
        <dbReference type="PROSITE-ProRule" id="PRU01217"/>
    </source>
</evidence>
<evidence type="ECO:0000255" key="7">
    <source>
        <dbReference type="PROSITE-ProRule" id="PRU01218"/>
    </source>
</evidence>
<evidence type="ECO:0000256" key="8">
    <source>
        <dbReference type="SAM" id="MobiDB-lite"/>
    </source>
</evidence>
<evidence type="ECO:0000305" key="9"/>
<evidence type="ECO:0000312" key="10">
    <source>
        <dbReference type="RGD" id="2128"/>
    </source>
</evidence>
<evidence type="ECO:0007744" key="11">
    <source>
    </source>
</evidence>
<feature type="signal peptide" evidence="4">
    <location>
        <begin position="1"/>
        <end position="31"/>
    </location>
</feature>
<feature type="chain" id="PRO_0000000209" description="Amyloid beta precursor like protein 2">
    <location>
        <begin position="32"/>
        <end position="765"/>
    </location>
</feature>
<feature type="topological domain" description="Extracellular" evidence="4">
    <location>
        <begin position="32"/>
        <end position="695"/>
    </location>
</feature>
<feature type="transmembrane region" description="Helical" evidence="4">
    <location>
        <begin position="696"/>
        <end position="718"/>
    </location>
</feature>
<feature type="topological domain" description="Cytoplasmic" evidence="4">
    <location>
        <begin position="719"/>
        <end position="765"/>
    </location>
</feature>
<feature type="domain" description="E1" evidence="6">
    <location>
        <begin position="46"/>
        <end position="205"/>
    </location>
</feature>
<feature type="domain" description="BPTI/Kunitz inhibitor" evidence="5">
    <location>
        <begin position="308"/>
        <end position="366"/>
    </location>
</feature>
<feature type="domain" description="E2" evidence="7">
    <location>
        <begin position="375"/>
        <end position="566"/>
    </location>
</feature>
<feature type="region of interest" description="GFLD subdomain" evidence="6">
    <location>
        <begin position="46"/>
        <end position="139"/>
    </location>
</feature>
<feature type="region of interest" description="CuBD subdomain" evidence="6">
    <location>
        <begin position="147"/>
        <end position="205"/>
    </location>
</feature>
<feature type="region of interest" description="Disordered" evidence="8">
    <location>
        <begin position="211"/>
        <end position="301"/>
    </location>
</feature>
<feature type="region of interest" description="Disordered" evidence="8">
    <location>
        <begin position="597"/>
        <end position="616"/>
    </location>
</feature>
<feature type="region of interest" description="Interaction with DAB2" evidence="1">
    <location>
        <begin position="751"/>
        <end position="765"/>
    </location>
</feature>
<feature type="short sequence motif" description="NPXY motif">
    <location>
        <begin position="752"/>
        <end position="757"/>
    </location>
</feature>
<feature type="compositionally biased region" description="Acidic residues" evidence="8">
    <location>
        <begin position="218"/>
        <end position="231"/>
    </location>
</feature>
<feature type="compositionally biased region" description="Acidic residues" evidence="8">
    <location>
        <begin position="240"/>
        <end position="271"/>
    </location>
</feature>
<feature type="compositionally biased region" description="Basic and acidic residues" evidence="8">
    <location>
        <begin position="272"/>
        <end position="284"/>
    </location>
</feature>
<feature type="binding site" evidence="6">
    <location>
        <position position="163"/>
    </location>
    <ligand>
        <name>Cu cation</name>
        <dbReference type="ChEBI" id="CHEBI:23378"/>
    </ligand>
</feature>
<feature type="binding site" evidence="6">
    <location>
        <position position="167"/>
    </location>
    <ligand>
        <name>Cu cation</name>
        <dbReference type="ChEBI" id="CHEBI:23378"/>
    </ligand>
</feature>
<feature type="binding site" evidence="6">
    <location>
        <position position="184"/>
    </location>
    <ligand>
        <name>Cu cation</name>
        <dbReference type="ChEBI" id="CHEBI:23378"/>
    </ligand>
</feature>
<feature type="site" description="Required for Cu(2+) reduction" evidence="6">
    <location>
        <position position="186"/>
    </location>
</feature>
<feature type="site" description="Reactive bond" evidence="1">
    <location>
        <begin position="322"/>
        <end position="323"/>
    </location>
</feature>
<feature type="modified residue" description="Phosphoserine" evidence="11">
    <location>
        <position position="216"/>
    </location>
</feature>
<feature type="modified residue" description="Phosphoserine" evidence="3">
    <location>
        <position position="592"/>
    </location>
</feature>
<feature type="glycosylation site" description="O-linked (Xyl...) (chondroitin sulfate) serine" evidence="3">
    <location>
        <position position="628"/>
    </location>
</feature>
<feature type="disulfide bond" evidence="6">
    <location>
        <begin position="56"/>
        <end position="80"/>
    </location>
</feature>
<feature type="disulfide bond" evidence="6">
    <location>
        <begin position="91"/>
        <end position="133"/>
    </location>
</feature>
<feature type="disulfide bond" evidence="6">
    <location>
        <begin position="116"/>
        <end position="123"/>
    </location>
</feature>
<feature type="disulfide bond" evidence="6">
    <location>
        <begin position="149"/>
        <end position="203"/>
    </location>
</feature>
<feature type="disulfide bond" evidence="6">
    <location>
        <begin position="160"/>
        <end position="190"/>
    </location>
</feature>
<feature type="disulfide bond" evidence="6">
    <location>
        <begin position="174"/>
        <end position="202"/>
    </location>
</feature>
<feature type="disulfide bond" evidence="5">
    <location>
        <begin position="312"/>
        <end position="362"/>
    </location>
</feature>
<feature type="disulfide bond" evidence="5">
    <location>
        <begin position="321"/>
        <end position="345"/>
    </location>
</feature>
<feature type="disulfide bond" evidence="5">
    <location>
        <begin position="337"/>
        <end position="358"/>
    </location>
</feature>
<feature type="splice variant" id="VSP_000020" description="In isoform C and isoform D." evidence="9">
    <location>
        <begin position="311"/>
        <end position="365"/>
    </location>
</feature>
<feature type="splice variant" id="VSP_000021" description="In isoform B and isoform D." evidence="9">
    <location>
        <begin position="616"/>
        <end position="627"/>
    </location>
</feature>
<feature type="sequence conflict" description="In Ref. 2; AAA42352." evidence="9" ref="2">
    <original>DQF</original>
    <variation>EFV</variation>
    <location>
        <begin position="575"/>
        <end position="577"/>
    </location>
</feature>
<organism>
    <name type="scientific">Rattus norvegicus</name>
    <name type="common">Rat</name>
    <dbReference type="NCBI Taxonomy" id="10116"/>
    <lineage>
        <taxon>Eukaryota</taxon>
        <taxon>Metazoa</taxon>
        <taxon>Chordata</taxon>
        <taxon>Craniata</taxon>
        <taxon>Vertebrata</taxon>
        <taxon>Euteleostomi</taxon>
        <taxon>Mammalia</taxon>
        <taxon>Eutheria</taxon>
        <taxon>Euarchontoglires</taxon>
        <taxon>Glires</taxon>
        <taxon>Rodentia</taxon>
        <taxon>Myomorpha</taxon>
        <taxon>Muroidea</taxon>
        <taxon>Muridae</taxon>
        <taxon>Murinae</taxon>
        <taxon>Rattus</taxon>
    </lineage>
</organism>
<protein>
    <recommendedName>
        <fullName evidence="10">Amyloid beta precursor like protein 2</fullName>
    </recommendedName>
    <alternativeName>
        <fullName evidence="2">Amyloid beta (A4) precursor-like protein 2</fullName>
    </alternativeName>
    <alternativeName>
        <fullName evidence="9">Amyloid protein homolog</fullName>
    </alternativeName>
    <alternativeName>
        <fullName evidence="10">Amyloid-like protein 2</fullName>
        <shortName>APLP-2</shortName>
    </alternativeName>
    <alternativeName>
        <fullName>CDEI box-binding protein</fullName>
        <shortName>CDEBP</shortName>
    </alternativeName>
    <alternativeName>
        <fullName evidence="10">Sperm membrane protein YWK-II</fullName>
    </alternativeName>
</protein>
<dbReference type="EMBL" id="X77934">
    <property type="protein sequence ID" value="CAA54906.1"/>
    <property type="molecule type" value="mRNA"/>
</dbReference>
<dbReference type="EMBL" id="M31322">
    <property type="protein sequence ID" value="AAA42352.1"/>
    <property type="molecule type" value="mRNA"/>
</dbReference>
<dbReference type="PIR" id="A35981">
    <property type="entry name" value="A35981"/>
</dbReference>
<dbReference type="PIR" id="S42880">
    <property type="entry name" value="S42880"/>
</dbReference>
<dbReference type="SMR" id="P15943"/>
<dbReference type="FunCoup" id="P15943">
    <property type="interactions" value="1720"/>
</dbReference>
<dbReference type="IntAct" id="P15943">
    <property type="interactions" value="1"/>
</dbReference>
<dbReference type="STRING" id="10116.ENSRNOP00000067077"/>
<dbReference type="MEROPS" id="I02.016"/>
<dbReference type="GlyCosmos" id="P15943">
    <property type="glycosylation" value="1 site, No reported glycans"/>
</dbReference>
<dbReference type="GlyGen" id="P15943">
    <property type="glycosylation" value="2 sites"/>
</dbReference>
<dbReference type="iPTMnet" id="P15943"/>
<dbReference type="PhosphoSitePlus" id="P15943"/>
<dbReference type="jPOST" id="P15943"/>
<dbReference type="PaxDb" id="10116-ENSRNOP00000067835"/>
<dbReference type="AGR" id="RGD:2128"/>
<dbReference type="RGD" id="2128">
    <property type="gene designation" value="Aplp2"/>
</dbReference>
<dbReference type="eggNOG" id="KOG3540">
    <property type="taxonomic scope" value="Eukaryota"/>
</dbReference>
<dbReference type="InParanoid" id="P15943"/>
<dbReference type="PhylomeDB" id="P15943"/>
<dbReference type="Reactome" id="R-RNO-114608">
    <property type="pathway name" value="Platelet degranulation"/>
</dbReference>
<dbReference type="Reactome" id="R-RNO-381426">
    <property type="pathway name" value="Regulation of Insulin-like Growth Factor (IGF) transport and uptake by Insulin-like Growth Factor Binding Proteins (IGFBPs)"/>
</dbReference>
<dbReference type="Reactome" id="R-RNO-8957275">
    <property type="pathway name" value="Post-translational protein phosphorylation"/>
</dbReference>
<dbReference type="PRO" id="PR:P15943"/>
<dbReference type="Proteomes" id="UP000002494">
    <property type="component" value="Unplaced"/>
</dbReference>
<dbReference type="GO" id="GO:0016020">
    <property type="term" value="C:membrane"/>
    <property type="evidence" value="ECO:0007669"/>
    <property type="project" value="UniProtKB-SubCell"/>
</dbReference>
<dbReference type="GO" id="GO:0005634">
    <property type="term" value="C:nucleus"/>
    <property type="evidence" value="ECO:0000266"/>
    <property type="project" value="RGD"/>
</dbReference>
<dbReference type="GO" id="GO:0097444">
    <property type="term" value="C:spine apparatus"/>
    <property type="evidence" value="ECO:0000266"/>
    <property type="project" value="RGD"/>
</dbReference>
<dbReference type="GO" id="GO:0008201">
    <property type="term" value="F:heparin binding"/>
    <property type="evidence" value="ECO:0007669"/>
    <property type="project" value="InterPro"/>
</dbReference>
<dbReference type="GO" id="GO:0042802">
    <property type="term" value="F:identical protein binding"/>
    <property type="evidence" value="ECO:0000266"/>
    <property type="project" value="RGD"/>
</dbReference>
<dbReference type="GO" id="GO:0004867">
    <property type="term" value="F:serine-type endopeptidase inhibitor activity"/>
    <property type="evidence" value="ECO:0000266"/>
    <property type="project" value="RGD"/>
</dbReference>
<dbReference type="GO" id="GO:0046914">
    <property type="term" value="F:transition metal ion binding"/>
    <property type="evidence" value="ECO:0007669"/>
    <property type="project" value="InterPro"/>
</dbReference>
<dbReference type="GO" id="GO:0007409">
    <property type="term" value="P:axonogenesis"/>
    <property type="evidence" value="ECO:0000318"/>
    <property type="project" value="GO_Central"/>
</dbReference>
<dbReference type="GO" id="GO:0007417">
    <property type="term" value="P:central nervous system development"/>
    <property type="evidence" value="ECO:0000318"/>
    <property type="project" value="GO_Central"/>
</dbReference>
<dbReference type="GO" id="GO:0008203">
    <property type="term" value="P:cholesterol metabolic process"/>
    <property type="evidence" value="ECO:0000266"/>
    <property type="project" value="RGD"/>
</dbReference>
<dbReference type="GO" id="GO:0030198">
    <property type="term" value="P:extracellular matrix organization"/>
    <property type="evidence" value="ECO:0000266"/>
    <property type="project" value="RGD"/>
</dbReference>
<dbReference type="GO" id="GO:0030900">
    <property type="term" value="P:forebrain development"/>
    <property type="evidence" value="ECO:0000266"/>
    <property type="project" value="RGD"/>
</dbReference>
<dbReference type="GO" id="GO:0006878">
    <property type="term" value="P:intracellular copper ion homeostasis"/>
    <property type="evidence" value="ECO:0000266"/>
    <property type="project" value="RGD"/>
</dbReference>
<dbReference type="GO" id="GO:0007626">
    <property type="term" value="P:locomotory behavior"/>
    <property type="evidence" value="ECO:0000266"/>
    <property type="project" value="RGD"/>
</dbReference>
<dbReference type="GO" id="GO:0007617">
    <property type="term" value="P:mating behavior"/>
    <property type="evidence" value="ECO:0000266"/>
    <property type="project" value="RGD"/>
</dbReference>
<dbReference type="GO" id="GO:0030901">
    <property type="term" value="P:midbrain development"/>
    <property type="evidence" value="ECO:0000266"/>
    <property type="project" value="RGD"/>
</dbReference>
<dbReference type="GO" id="GO:0050885">
    <property type="term" value="P:neuromuscular process controlling balance"/>
    <property type="evidence" value="ECO:0000266"/>
    <property type="project" value="RGD"/>
</dbReference>
<dbReference type="GO" id="GO:0001967">
    <property type="term" value="P:suckling behavior"/>
    <property type="evidence" value="ECO:0000266"/>
    <property type="project" value="RGD"/>
</dbReference>
<dbReference type="CDD" id="cd21709">
    <property type="entry name" value="JMTM_APLP2"/>
    <property type="match status" value="1"/>
</dbReference>
<dbReference type="CDD" id="cd22607">
    <property type="entry name" value="Kunitz_ABPP-like"/>
    <property type="match status" value="1"/>
</dbReference>
<dbReference type="FunFam" id="3.30.1490.140:FF:000001">
    <property type="entry name" value="Amyloid beta (A4) protein b"/>
    <property type="match status" value="1"/>
</dbReference>
<dbReference type="FunFam" id="3.90.570.10:FF:000001">
    <property type="entry name" value="Amyloid beta A4 protein"/>
    <property type="match status" value="1"/>
</dbReference>
<dbReference type="FunFam" id="1.20.120.770:FF:000001">
    <property type="entry name" value="Amyloid beta A4 protein-like isoform 1"/>
    <property type="match status" value="1"/>
</dbReference>
<dbReference type="FunFam" id="4.10.410.10:FF:000003">
    <property type="entry name" value="amyloid-like protein 2 isoform X1"/>
    <property type="match status" value="1"/>
</dbReference>
<dbReference type="Gene3D" id="6.10.250.1670">
    <property type="match status" value="1"/>
</dbReference>
<dbReference type="Gene3D" id="1.20.120.770">
    <property type="entry name" value="Amyloid precursor protein, E2 domain"/>
    <property type="match status" value="1"/>
</dbReference>
<dbReference type="Gene3D" id="3.30.1490.140">
    <property type="entry name" value="Amyloidogenic glycoprotein, copper-binding domain"/>
    <property type="match status" value="1"/>
</dbReference>
<dbReference type="Gene3D" id="3.90.570.10">
    <property type="entry name" value="Amyloidogenic glycoprotein, heparin-binding domain"/>
    <property type="match status" value="1"/>
</dbReference>
<dbReference type="Gene3D" id="4.10.410.10">
    <property type="entry name" value="Pancreatic trypsin inhibitor Kunitz domain"/>
    <property type="match status" value="1"/>
</dbReference>
<dbReference type="Gene3D" id="2.30.29.30">
    <property type="entry name" value="Pleckstrin-homology domain (PH domain)/Phosphotyrosine-binding domain (PTB)"/>
    <property type="match status" value="1"/>
</dbReference>
<dbReference type="InterPro" id="IPR036669">
    <property type="entry name" value="Amyloid_Cu-bd_sf"/>
</dbReference>
<dbReference type="InterPro" id="IPR008155">
    <property type="entry name" value="Amyloid_glyco"/>
</dbReference>
<dbReference type="InterPro" id="IPR011178">
    <property type="entry name" value="Amyloid_glyco_Cu-bd"/>
</dbReference>
<dbReference type="InterPro" id="IPR024329">
    <property type="entry name" value="Amyloid_glyco_E2_domain"/>
</dbReference>
<dbReference type="InterPro" id="IPR008154">
    <property type="entry name" value="Amyloid_glyco_extra"/>
</dbReference>
<dbReference type="InterPro" id="IPR015849">
    <property type="entry name" value="Amyloid_glyco_heparin-bd"/>
</dbReference>
<dbReference type="InterPro" id="IPR036454">
    <property type="entry name" value="Amyloid_glyco_heparin-bd_sf"/>
</dbReference>
<dbReference type="InterPro" id="IPR019745">
    <property type="entry name" value="Amyloid_glyco_intracell_CS"/>
</dbReference>
<dbReference type="InterPro" id="IPR019543">
    <property type="entry name" value="APP_amyloid_C"/>
</dbReference>
<dbReference type="InterPro" id="IPR019744">
    <property type="entry name" value="APP_CUBD_CS"/>
</dbReference>
<dbReference type="InterPro" id="IPR036176">
    <property type="entry name" value="E2_sf"/>
</dbReference>
<dbReference type="InterPro" id="IPR002223">
    <property type="entry name" value="Kunitz_BPTI"/>
</dbReference>
<dbReference type="InterPro" id="IPR036880">
    <property type="entry name" value="Kunitz_BPTI_sf"/>
</dbReference>
<dbReference type="InterPro" id="IPR011993">
    <property type="entry name" value="PH-like_dom_sf"/>
</dbReference>
<dbReference type="InterPro" id="IPR020901">
    <property type="entry name" value="Prtase_inh_Kunz-CS"/>
</dbReference>
<dbReference type="PANTHER" id="PTHR23103">
    <property type="entry name" value="ALZHEIMER'S DISEASE BETA-AMYLOID RELATED"/>
    <property type="match status" value="1"/>
</dbReference>
<dbReference type="PANTHER" id="PTHR23103:SF14">
    <property type="entry name" value="AMYLOID BETA PRECURSOR LIKE PROTEIN 2"/>
    <property type="match status" value="1"/>
</dbReference>
<dbReference type="Pfam" id="PF10515">
    <property type="entry name" value="APP_amyloid"/>
    <property type="match status" value="1"/>
</dbReference>
<dbReference type="Pfam" id="PF12924">
    <property type="entry name" value="APP_Cu_bd"/>
    <property type="match status" value="1"/>
</dbReference>
<dbReference type="Pfam" id="PF12925">
    <property type="entry name" value="APP_E2"/>
    <property type="match status" value="1"/>
</dbReference>
<dbReference type="Pfam" id="PF02177">
    <property type="entry name" value="APP_N"/>
    <property type="match status" value="1"/>
</dbReference>
<dbReference type="Pfam" id="PF00014">
    <property type="entry name" value="Kunitz_BPTI"/>
    <property type="match status" value="1"/>
</dbReference>
<dbReference type="PRINTS" id="PR00203">
    <property type="entry name" value="AMYLOIDA4"/>
</dbReference>
<dbReference type="PRINTS" id="PR00759">
    <property type="entry name" value="BASICPTASE"/>
</dbReference>
<dbReference type="SMART" id="SM00006">
    <property type="entry name" value="A4_EXTRA"/>
    <property type="match status" value="1"/>
</dbReference>
<dbReference type="SMART" id="SM00131">
    <property type="entry name" value="KU"/>
    <property type="match status" value="1"/>
</dbReference>
<dbReference type="SUPFAM" id="SSF56491">
    <property type="entry name" value="A heparin-binding domain"/>
    <property type="match status" value="1"/>
</dbReference>
<dbReference type="SUPFAM" id="SSF89811">
    <property type="entry name" value="Amyloid beta a4 protein copper binding domain (domain 2)"/>
    <property type="match status" value="1"/>
</dbReference>
<dbReference type="SUPFAM" id="SSF57362">
    <property type="entry name" value="BPTI-like"/>
    <property type="match status" value="1"/>
</dbReference>
<dbReference type="SUPFAM" id="SSF109843">
    <property type="entry name" value="CAPPD, an extracellular domain of amyloid beta A4 protein"/>
    <property type="match status" value="1"/>
</dbReference>
<dbReference type="PROSITE" id="PS00319">
    <property type="entry name" value="APP_CUBD"/>
    <property type="match status" value="1"/>
</dbReference>
<dbReference type="PROSITE" id="PS51869">
    <property type="entry name" value="APP_E1"/>
    <property type="match status" value="1"/>
</dbReference>
<dbReference type="PROSITE" id="PS51870">
    <property type="entry name" value="APP_E2"/>
    <property type="match status" value="1"/>
</dbReference>
<dbReference type="PROSITE" id="PS00320">
    <property type="entry name" value="APP_INTRA"/>
    <property type="match status" value="1"/>
</dbReference>
<dbReference type="PROSITE" id="PS00280">
    <property type="entry name" value="BPTI_KUNITZ_1"/>
    <property type="match status" value="1"/>
</dbReference>
<dbReference type="PROSITE" id="PS50279">
    <property type="entry name" value="BPTI_KUNITZ_2"/>
    <property type="match status" value="1"/>
</dbReference>
<sequence>MAATGTAAAAATGKLLVLLLLGLTAPAAALAGYIEALAANAGTGFAVAEPQIAMFCGKLNMHVNIQTGKWEPDPTGTKSCLGTKEEVLQYCQEIYPELQITNVMEANQPVNIDSWCRRDKKQCRSHIVIPFKCLVGEFVSDVLLVPENCQFFHQERMEVCEKHQRWHTVVKEACLTEGMTLYSYGMLLPCGVDQFHGTEYVCCPQTKVVDSDSTMSKEEEEEEEEDEEEDYALDKSEFPTEADLEDFTEAAADEDEDEEEEEEEEGEEVVEDRDYYYDSFKGDDYNEENPTEPSSDGTISDKEIAHDVKAVCSQEAMTGPCRAVMPRWYFDLSKGKCVRFIYGGCGGNRNNFESEDYCMAVCKTMIPPTPLPTNDVDVYFETSADDNEHARFQKAKEQLEIRHRSRMDRVKKEWEEAELQAKNLPKAERQTLIQHFQAMVKALEKEAASEKQQLVETHLARVEAMLNDRRRIALENYLAALQSDPPRPHRILQALRRYVRAENKDRLHTIRHYQHVLAVDPEKAAQMKSQVMTHLHVIEERRNQSLSLLYKVPYVAQEIQEEIDELLQEQRADMDQFTSSISENPVDVRVSSEESEEIPPFHPFHPFPSLSENEDTQPELYHPMKKGSGMAEQDGGLIGAEEKVINSKNKMDENMVIDETLDVKEMIFNAERVGGLEEEPDSVGPLREDFSLSSSALIGLLVIAVAIATVIVISLVMLRKRQYGTISHGIVEVHPMLTPEERHLNKMQNHGYENPTYKYLEQMQI</sequence>
<name>APLP2_RAT</name>
<accession>P15943</accession>
<proteinExistence type="evidence at protein level"/>
<comment type="function">
    <text evidence="1">May play a role in the regulation of hemostasis. The soluble form may have inhibitory properties towards coagulation factors. May interact with cellular G-protein signaling pathways. May bind to the DNA 5'-GTCACATG-3'(CDEI box). Inhibits trypsin, chymotrypsin, plasmin, factor XIA and plasma and glandular kallikrein. Modulates the Cu/Zn nitric oxide-catalyzed autodegradation of GPC1 heparan sulfate side chains in fibroblasts (By similarity).</text>
</comment>
<comment type="subunit">
    <text evidence="1 3">Interacts with CPEB1. Interacts (via NPXY motif) with DAB2 (via PID domain); the interaction is impaired by tyrosine phosphorylation of the NPXY motif (By similarity). Interacts (via cytoplasmic domain) with APBB2/FE65L (By similarity). Interacts (via intracellular domain) with APBB3/FE65L2 (By similarity).</text>
</comment>
<comment type="subcellular location">
    <subcellularLocation>
        <location>Membrane</location>
        <topology>Single-pass type I membrane protein</topology>
    </subcellularLocation>
</comment>
<comment type="alternative products">
    <event type="alternative splicing"/>
    <isoform>
        <id>P15943-1</id>
        <name>A</name>
        <sequence type="displayed"/>
    </isoform>
    <isoform>
        <id>P15943-2</id>
        <name>B</name>
        <sequence type="described" ref="VSP_000021"/>
    </isoform>
    <isoform>
        <id>P15943-3</id>
        <name>C</name>
        <sequence type="described" ref="VSP_000020"/>
    </isoform>
    <isoform>
        <id>P15943-4</id>
        <name>D</name>
        <sequence type="described" ref="VSP_000020 VSP_000021"/>
    </isoform>
</comment>
<comment type="similarity">
    <text evidence="6">Belongs to the APP family.</text>
</comment>
<keyword id="KW-0025">Alternative splicing</keyword>
<keyword id="KW-0186">Copper</keyword>
<keyword id="KW-1015">Disulfide bond</keyword>
<keyword id="KW-0325">Glycoprotein</keyword>
<keyword id="KW-0472">Membrane</keyword>
<keyword id="KW-0479">Metal-binding</keyword>
<keyword id="KW-0597">Phosphoprotein</keyword>
<keyword id="KW-0646">Protease inhibitor</keyword>
<keyword id="KW-0654">Proteoglycan</keyword>
<keyword id="KW-1185">Reference proteome</keyword>
<keyword id="KW-0722">Serine protease inhibitor</keyword>
<keyword id="KW-0732">Signal</keyword>
<keyword id="KW-0812">Transmembrane</keyword>
<keyword id="KW-1133">Transmembrane helix</keyword>
<gene>
    <name evidence="10" type="primary">Aplp2</name>
    <name type="synonym">APPL2</name>
</gene>